<evidence type="ECO:0000250" key="1">
    <source>
        <dbReference type="UniProtKB" id="P0AFQ7"/>
    </source>
</evidence>
<evidence type="ECO:0000255" key="2">
    <source>
        <dbReference type="HAMAP-Rule" id="MF_00901"/>
    </source>
</evidence>
<evidence type="ECO:0000269" key="3">
    <source>
    </source>
</evidence>
<evidence type="ECO:0000269" key="4">
    <source>
    </source>
</evidence>
<evidence type="ECO:0000269" key="5">
    <source>
    </source>
</evidence>
<evidence type="ECO:0000269" key="6">
    <source ref="11"/>
</evidence>
<evidence type="ECO:0000303" key="7">
    <source>
    </source>
</evidence>
<evidence type="ECO:0000305" key="8"/>
<evidence type="ECO:0000305" key="9">
    <source>
    </source>
</evidence>
<evidence type="ECO:0000305" key="10">
    <source>
    </source>
</evidence>
<evidence type="ECO:0000305" key="11">
    <source>
    </source>
</evidence>
<evidence type="ECO:0007744" key="12">
    <source>
        <dbReference type="PDB" id="1XWY"/>
    </source>
</evidence>
<evidence type="ECO:0007744" key="13">
    <source>
        <dbReference type="PDB" id="4P5U"/>
    </source>
</evidence>
<evidence type="ECO:0007744" key="14">
    <source>
        <dbReference type="PDB" id="4PE8"/>
    </source>
</evidence>
<evidence type="ECO:0007829" key="15">
    <source>
        <dbReference type="PDB" id="1XWY"/>
    </source>
</evidence>
<evidence type="ECO:0007829" key="16">
    <source>
        <dbReference type="PDB" id="4P5U"/>
    </source>
</evidence>
<name>TATD_ECOLI</name>
<comment type="function">
    <text evidence="2 3 5">3'-5' exonuclease that prefers single-stranded DNA and RNA. May play a role in the H(2)O(2)-induced DNA damage repair.</text>
</comment>
<comment type="cofactor">
    <cofactor evidence="2 3 5">
        <name>Mg(2+)</name>
        <dbReference type="ChEBI" id="CHEBI:18420"/>
    </cofactor>
    <cofactor evidence="5">
        <name>Mn(2+)</name>
        <dbReference type="ChEBI" id="CHEBI:29035"/>
    </cofactor>
    <text evidence="5">No activity in the presence of Ca(2+) or Zn(2+).</text>
</comment>
<comment type="subunit">
    <text evidence="2 3 5 6">Monomer.</text>
</comment>
<comment type="subcellular location">
    <subcellularLocation>
        <location evidence="2 3 5">Cytoplasm</location>
    </subcellularLocation>
</comment>
<comment type="induction">
    <text evidence="4">Constitutively expressed.</text>
</comment>
<comment type="disruption phenotype">
    <text evidence="5">Knockout cells are less resistant to the DNA damaging agent H(2)O(2).</text>
</comment>
<comment type="similarity">
    <text evidence="2 8">Belongs to the metallo-dependent hydrolases superfamily. TatD-type hydrolase family. TatD subfamily.</text>
</comment>
<comment type="caution">
    <text evidence="9 10">Was suggested to be a central component of a quality control system that is linked to the Tat translocation system (PubMed:19343049). However, it was shown later that malfolded Tat substrates are Tat-independently degraded and that TatD is not involved in quality control of the Tat substrates (PubMed:20659466).</text>
</comment>
<comment type="sequence caution" evidence="8">
    <conflict type="frameshift">
        <sequence resource="EMBL-CDS" id="AAA67636"/>
    </conflict>
</comment>
<comment type="sequence caution" evidence="8">
    <conflict type="frameshift">
        <sequence resource="EMBL-CDS" id="AAA67637"/>
    </conflict>
</comment>
<comment type="sequence caution" evidence="8">
    <conflict type="erroneous initiation">
        <sequence resource="EMBL-CDS" id="CAA06727"/>
    </conflict>
    <text>Extended N-terminus.</text>
</comment>
<reference key="1">
    <citation type="journal article" date="1992" name="Mol. Microbiol.">
        <title>Escherichia coli HlyT protein, a transcriptional activator of haemolysin synthesis and secretion, is encoded by the rfaH (sfrB) locus required for expression of sex factor and lipopolysaccharide genes.</title>
        <authorList>
            <person name="Bailey M.J.A."/>
            <person name="Koronakis V."/>
            <person name="Schmoll T."/>
            <person name="Hughes C."/>
        </authorList>
    </citation>
    <scope>NUCLEOTIDE SEQUENCE [GENOMIC DNA]</scope>
    <source>
        <strain>5KC</strain>
    </source>
</reference>
<reference key="2">
    <citation type="journal article" date="1998" name="EMBO J.">
        <title>Overlapping functions of components of a bacterial Sec-independent protein export pathway.</title>
        <authorList>
            <person name="Sargent F."/>
            <person name="Bogsch E.G."/>
            <person name="Stanley N.R."/>
            <person name="Wexler M."/>
            <person name="Robinson C."/>
            <person name="Berks B.C."/>
            <person name="Palmer T."/>
        </authorList>
    </citation>
    <scope>NUCLEOTIDE SEQUENCE [GENOMIC DNA]</scope>
    <scope>GENE NAME</scope>
    <source>
        <strain>K12</strain>
    </source>
</reference>
<reference key="3">
    <citation type="journal article" date="1992" name="Science">
        <title>Analysis of the Escherichia coli genome: DNA sequence of the region from 84.5 to 86.5 minutes.</title>
        <authorList>
            <person name="Daniels D.L."/>
            <person name="Plunkett G. III"/>
            <person name="Burland V.D."/>
            <person name="Blattner F.R."/>
        </authorList>
    </citation>
    <scope>NUCLEOTIDE SEQUENCE [LARGE SCALE GENOMIC DNA]</scope>
    <source>
        <strain>K12 / MG1655 / ATCC 47076</strain>
    </source>
</reference>
<reference key="4">
    <citation type="journal article" date="1997" name="Science">
        <title>The complete genome sequence of Escherichia coli K-12.</title>
        <authorList>
            <person name="Blattner F.R."/>
            <person name="Plunkett G. III"/>
            <person name="Bloch C.A."/>
            <person name="Perna N.T."/>
            <person name="Burland V."/>
            <person name="Riley M."/>
            <person name="Collado-Vides J."/>
            <person name="Glasner J.D."/>
            <person name="Rode C.K."/>
            <person name="Mayhew G.F."/>
            <person name="Gregor J."/>
            <person name="Davis N.W."/>
            <person name="Kirkpatrick H.A."/>
            <person name="Goeden M.A."/>
            <person name="Rose D.J."/>
            <person name="Mau B."/>
            <person name="Shao Y."/>
        </authorList>
    </citation>
    <scope>NUCLEOTIDE SEQUENCE [LARGE SCALE GENOMIC DNA]</scope>
    <source>
        <strain>K12 / MG1655 / ATCC 47076</strain>
    </source>
</reference>
<reference key="5">
    <citation type="journal article" date="2006" name="Nucleic Acids Res.">
        <title>Escherichia coli K-12: a cooperatively developed annotation snapshot -- 2005.</title>
        <authorList>
            <person name="Riley M."/>
            <person name="Abe T."/>
            <person name="Arnaud M.B."/>
            <person name="Berlyn M.K.B."/>
            <person name="Blattner F.R."/>
            <person name="Chaudhuri R.R."/>
            <person name="Glasner J.D."/>
            <person name="Horiuchi T."/>
            <person name="Keseler I.M."/>
            <person name="Kosuge T."/>
            <person name="Mori H."/>
            <person name="Perna N.T."/>
            <person name="Plunkett G. III"/>
            <person name="Rudd K.E."/>
            <person name="Serres M.H."/>
            <person name="Thomas G.H."/>
            <person name="Thomson N.R."/>
            <person name="Wishart D."/>
            <person name="Wanner B.L."/>
        </authorList>
    </citation>
    <scope>SEQUENCE REVISION</scope>
</reference>
<reference key="6">
    <citation type="journal article" date="2006" name="Mol. Syst. Biol.">
        <title>Highly accurate genome sequences of Escherichia coli K-12 strains MG1655 and W3110.</title>
        <authorList>
            <person name="Hayashi K."/>
            <person name="Morooka N."/>
            <person name="Yamamoto Y."/>
            <person name="Fujita K."/>
            <person name="Isono K."/>
            <person name="Choi S."/>
            <person name="Ohtsubo E."/>
            <person name="Baba T."/>
            <person name="Wanner B.L."/>
            <person name="Mori H."/>
            <person name="Horiuchi T."/>
        </authorList>
    </citation>
    <scope>NUCLEOTIDE SEQUENCE [LARGE SCALE GENOMIC DNA]</scope>
    <source>
        <strain>K12 / W3110 / ATCC 27325 / DSM 5911</strain>
    </source>
</reference>
<reference key="7">
    <citation type="journal article" date="2000" name="J. Biol. Chem.">
        <title>TatD is a cytoplasmic protein with DNase activity. No requirement for TatD family proteins in sec-independent protein export.</title>
        <authorList>
            <person name="Wexler M."/>
            <person name="Sargent F."/>
            <person name="Jack R.L."/>
            <person name="Stanley N.R."/>
            <person name="Bogsch E.G."/>
            <person name="Robinson C."/>
            <person name="Berks B.C."/>
            <person name="Palmer T."/>
        </authorList>
    </citation>
    <scope>PROTEIN SEQUENCE OF 1-6</scope>
    <scope>FUNCTION AS A DNASE</scope>
    <scope>COFACTOR</scope>
    <scope>SUBUNIT</scope>
    <scope>SUBCELLULAR LOCATION</scope>
</reference>
<reference key="8">
    <citation type="journal article" date="2001" name="J. Bacteriol.">
        <title>Constitutive expression of Escherichia coli tat genes indicates an important role for the twin-arginine translocase during aerobic and anaerobic growth.</title>
        <authorList>
            <person name="Jack R.L."/>
            <person name="Sargent F."/>
            <person name="Berks B.C."/>
            <person name="Sawers G."/>
            <person name="Palmer T."/>
        </authorList>
    </citation>
    <scope>INDUCTION</scope>
</reference>
<reference key="9">
    <citation type="journal article" date="2009" name="EMBO Rep.">
        <title>TatD is a central component of a Tat translocon-initiated quality control system for exported FeS proteins in Escherichia coli.</title>
        <authorList>
            <person name="Matos C.F."/>
            <person name="Di Cola A."/>
            <person name="Robinson C."/>
        </authorList>
    </citation>
    <scope>PROPOSED FUNCTION IN QUALITY CONTROL</scope>
    <source>
        <strain>K12 / MC4100 / ATCC 35695 / DSM 6574</strain>
    </source>
</reference>
<reference key="10">
    <citation type="journal article" date="2010" name="FEBS Lett.">
        <title>Malfolded recombinant Tat substrates are Tat-independently degraded in Escherichia coli.</title>
        <authorList>
            <person name="Lindenstrauss U."/>
            <person name="Matos C.F."/>
            <person name="Graubner W."/>
            <person name="Robinson C."/>
            <person name="Brueser T."/>
        </authorList>
    </citation>
    <scope>LACK OF FUNCTION IN QUALITY CONTROL</scope>
</reference>
<reference evidence="12" key="11">
    <citation type="submission" date="2009-02" db="PDB data bank">
        <title>Crystal structure of tatD DNase from Escherichia coli at 2.0 A resolution.</title>
        <authorList>
            <consortium name="New York structural genomix research consortium (NYSGXRC)"/>
        </authorList>
    </citation>
    <scope>X-RAY CRYSTALLOGRAPHY (2.0 ANGSTROMS) IN COMPLEX WITH ZINC IONS</scope>
    <scope>SUBUNIT</scope>
</reference>
<reference evidence="13 14" key="12">
    <citation type="journal article" date="2014" name="Nucleic Acids Res.">
        <title>Structure and function of TatD exonuclease in DNA repair.</title>
        <authorList>
            <person name="Chen Y.C."/>
            <person name="Li C.L."/>
            <person name="Hsiao Y.Y."/>
            <person name="Duh Y."/>
            <person name="Yuan H.S."/>
        </authorList>
    </citation>
    <scope>X-RAY CRYSTALLOGRAPHY (2.00 ANGSTROMS)</scope>
    <scope>FUNCTION</scope>
    <scope>CATALYTIC ACTIVITY</scope>
    <scope>COFACTOR</scope>
    <scope>SUBUNIT</scope>
    <scope>SUBCELLULAR LOCATION</scope>
    <scope>DISRUPTION PHENOTYPE</scope>
    <scope>MUTAGENESIS OF HIS-62; HIS-64; GLU-91; HIS-127; HIS-152; GLU-201 AND ASP-203</scope>
    <source>
        <strain>K12</strain>
    </source>
</reference>
<gene>
    <name evidence="2 7" type="primary">tatD</name>
    <name type="synonym">mttC</name>
    <name type="synonym">yigW</name>
    <name type="synonym">yigX</name>
    <name type="ordered locus">b4483</name>
    <name type="ordered locus">JW5931</name>
</gene>
<feature type="chain" id="PRO_0000201992" description="3'-5' ssDNA/RNA exonuclease TatD">
    <location>
        <begin position="1"/>
        <end position="260"/>
    </location>
</feature>
<feature type="binding site" evidence="1 2">
    <location>
        <position position="91"/>
    </location>
    <ligand>
        <name>a divalent metal cation</name>
        <dbReference type="ChEBI" id="CHEBI:60240"/>
    </ligand>
</feature>
<feature type="binding site" evidence="1 2">
    <location>
        <position position="127"/>
    </location>
    <ligand>
        <name>a divalent metal cation</name>
        <dbReference type="ChEBI" id="CHEBI:60240"/>
    </ligand>
</feature>
<feature type="binding site" evidence="1 2">
    <location>
        <position position="152"/>
    </location>
    <ligand>
        <name>a divalent metal cation</name>
        <dbReference type="ChEBI" id="CHEBI:60240"/>
    </ligand>
</feature>
<feature type="mutagenesis site" description="Significant decrease in nuclease activity." evidence="5">
    <original>H</original>
    <variation>A</variation>
    <location>
        <position position="62"/>
    </location>
</feature>
<feature type="mutagenesis site" description="No change in nuclease activity." evidence="5">
    <original>H</original>
    <variation>A</variation>
    <location>
        <position position="64"/>
    </location>
</feature>
<feature type="mutagenesis site" description="Lack of nuclease activity." evidence="5">
    <original>E</original>
    <variation>A</variation>
    <location>
        <position position="91"/>
    </location>
</feature>
<feature type="mutagenesis site" description="No change in nuclease activity." evidence="5">
    <original>H</original>
    <variation>A</variation>
    <location>
        <position position="127"/>
    </location>
</feature>
<feature type="mutagenesis site" description="No change in nuclease activity." evidence="5">
    <original>H</original>
    <variation>A</variation>
    <location>
        <position position="152"/>
    </location>
</feature>
<feature type="mutagenesis site" description="Lack of nuclease activity." evidence="5">
    <original>E</original>
    <variation>A</variation>
    <location>
        <position position="201"/>
    </location>
</feature>
<feature type="mutagenesis site" description="Lack of nuclease activity." evidence="5">
    <original>D</original>
    <variation>A</variation>
    <location>
        <position position="203"/>
    </location>
</feature>
<feature type="strand" evidence="15">
    <location>
        <begin position="2"/>
        <end position="6"/>
    </location>
</feature>
<feature type="helix" evidence="15">
    <location>
        <begin position="11"/>
        <end position="13"/>
    </location>
</feature>
<feature type="turn" evidence="15">
    <location>
        <begin position="14"/>
        <end position="16"/>
    </location>
</feature>
<feature type="helix" evidence="15">
    <location>
        <begin position="17"/>
        <end position="26"/>
    </location>
</feature>
<feature type="strand" evidence="15">
    <location>
        <begin position="31"/>
        <end position="34"/>
    </location>
</feature>
<feature type="helix" evidence="15">
    <location>
        <begin position="39"/>
        <end position="51"/>
    </location>
</feature>
<feature type="strand" evidence="15">
    <location>
        <begin position="55"/>
        <end position="59"/>
    </location>
</feature>
<feature type="helix" evidence="15">
    <location>
        <begin position="63"/>
        <end position="68"/>
    </location>
</feature>
<feature type="helix" evidence="15">
    <location>
        <begin position="71"/>
        <end position="81"/>
    </location>
</feature>
<feature type="strand" evidence="15">
    <location>
        <begin position="86"/>
        <end position="95"/>
    </location>
</feature>
<feature type="turn" evidence="15">
    <location>
        <begin position="96"/>
        <end position="98"/>
    </location>
</feature>
<feature type="strand" evidence="16">
    <location>
        <begin position="99"/>
        <end position="101"/>
    </location>
</feature>
<feature type="helix" evidence="15">
    <location>
        <begin position="103"/>
        <end position="120"/>
    </location>
</feature>
<feature type="strand" evidence="15">
    <location>
        <begin position="124"/>
        <end position="130"/>
    </location>
</feature>
<feature type="helix" evidence="15">
    <location>
        <begin position="132"/>
        <end position="139"/>
    </location>
</feature>
<feature type="helix" evidence="15">
    <location>
        <begin position="140"/>
        <end position="145"/>
    </location>
</feature>
<feature type="strand" evidence="15">
    <location>
        <begin position="149"/>
        <end position="151"/>
    </location>
</feature>
<feature type="helix" evidence="15">
    <location>
        <begin position="158"/>
        <end position="166"/>
    </location>
</feature>
<feature type="strand" evidence="15">
    <location>
        <begin position="170"/>
        <end position="173"/>
    </location>
</feature>
<feature type="helix" evidence="15">
    <location>
        <begin position="175"/>
        <end position="178"/>
    </location>
</feature>
<feature type="turn" evidence="15">
    <location>
        <begin position="180"/>
        <end position="182"/>
    </location>
</feature>
<feature type="helix" evidence="15">
    <location>
        <begin position="184"/>
        <end position="189"/>
    </location>
</feature>
<feature type="helix" evidence="15">
    <location>
        <begin position="190"/>
        <end position="192"/>
    </location>
</feature>
<feature type="helix" evidence="15">
    <location>
        <begin position="195"/>
        <end position="197"/>
    </location>
</feature>
<feature type="strand" evidence="15">
    <location>
        <begin position="198"/>
        <end position="200"/>
    </location>
</feature>
<feature type="helix" evidence="15">
    <location>
        <begin position="223"/>
        <end position="225"/>
    </location>
</feature>
<feature type="helix" evidence="15">
    <location>
        <begin position="226"/>
        <end position="236"/>
    </location>
</feature>
<feature type="helix" evidence="15">
    <location>
        <begin position="241"/>
        <end position="256"/>
    </location>
</feature>
<keyword id="KW-0002">3D-structure</keyword>
<keyword id="KW-0963">Cytoplasm</keyword>
<keyword id="KW-0903">Direct protein sequencing</keyword>
<keyword id="KW-0269">Exonuclease</keyword>
<keyword id="KW-0378">Hydrolase</keyword>
<keyword id="KW-0460">Magnesium</keyword>
<keyword id="KW-0464">Manganese</keyword>
<keyword id="KW-0479">Metal-binding</keyword>
<keyword id="KW-0540">Nuclease</keyword>
<keyword id="KW-1185">Reference proteome</keyword>
<proteinExistence type="evidence at protein level"/>
<accession>P27859</accession>
<accession>P27860</accession>
<accession>P78128</accession>
<accession>P78129</accession>
<accession>Q2M8E4</accession>
<protein>
    <recommendedName>
        <fullName evidence="2 8">3'-5' ssDNA/RNA exonuclease TatD</fullName>
        <ecNumber evidence="2 11">3.1.11.-</ecNumber>
        <ecNumber evidence="2 11">3.1.13.-</ecNumber>
    </recommendedName>
    <alternativeName>
        <fullName evidence="2 8">DNase TatD</fullName>
    </alternativeName>
</protein>
<sequence length="260" mass="28974">MFDIGVNLTSSQFAKDRDDVVACAFDAGVNGLLITGTNLRESQQAQKLARQYSSCWSTAGVHPHDSSQWQAATEEAIIELAAQPEVVAIGECGLDFNRNFSTPEEQERAFVAQLRIAADLNMPVFMHCRDAHERFMTLLEPWLDKLPGAVLHCFTGTREEMQACVAHGIYIGITGWVCDERRGLELRELLPLIPAEKLLIETDAPYLLPRDLTPKPSSRRNEPAHLPHILQRIAHWRGEDAAWLAATTDANVKTLFGIAF</sequence>
<organism>
    <name type="scientific">Escherichia coli (strain K12)</name>
    <dbReference type="NCBI Taxonomy" id="83333"/>
    <lineage>
        <taxon>Bacteria</taxon>
        <taxon>Pseudomonadati</taxon>
        <taxon>Pseudomonadota</taxon>
        <taxon>Gammaproteobacteria</taxon>
        <taxon>Enterobacterales</taxon>
        <taxon>Enterobacteriaceae</taxon>
        <taxon>Escherichia</taxon>
    </lineage>
</organism>
<dbReference type="EC" id="3.1.11.-" evidence="2 11"/>
<dbReference type="EC" id="3.1.13.-" evidence="2 11"/>
<dbReference type="EMBL" id="X65013">
    <property type="status" value="NOT_ANNOTATED_CDS"/>
    <property type="molecule type" value="Genomic_DNA"/>
</dbReference>
<dbReference type="EMBL" id="AJ005830">
    <property type="protein sequence ID" value="CAA06727.1"/>
    <property type="status" value="ALT_INIT"/>
    <property type="molecule type" value="Genomic_DNA"/>
</dbReference>
<dbReference type="EMBL" id="M87049">
    <property type="protein sequence ID" value="AAA67636.1"/>
    <property type="status" value="ALT_FRAME"/>
    <property type="molecule type" value="Genomic_DNA"/>
</dbReference>
<dbReference type="EMBL" id="M87049">
    <property type="protein sequence ID" value="AAA67637.1"/>
    <property type="status" value="ALT_FRAME"/>
    <property type="molecule type" value="Genomic_DNA"/>
</dbReference>
<dbReference type="EMBL" id="U00096">
    <property type="protein sequence ID" value="AAT48229.1"/>
    <property type="molecule type" value="Genomic_DNA"/>
</dbReference>
<dbReference type="EMBL" id="AP009048">
    <property type="protein sequence ID" value="BAE77462.1"/>
    <property type="molecule type" value="Genomic_DNA"/>
</dbReference>
<dbReference type="PIR" id="A65189">
    <property type="entry name" value="A65189"/>
</dbReference>
<dbReference type="RefSeq" id="WP_000459630.1">
    <property type="nucleotide sequence ID" value="NZ_SSZK01000046.1"/>
</dbReference>
<dbReference type="RefSeq" id="YP_026271.1">
    <property type="nucleotide sequence ID" value="NC_000913.3"/>
</dbReference>
<dbReference type="PDB" id="1XWY">
    <property type="method" value="X-ray"/>
    <property type="resolution" value="2.00 A"/>
    <property type="chains" value="A=1-260"/>
</dbReference>
<dbReference type="PDB" id="4P5U">
    <property type="method" value="X-ray"/>
    <property type="resolution" value="2.00 A"/>
    <property type="chains" value="A=1-260"/>
</dbReference>
<dbReference type="PDB" id="4PE8">
    <property type="method" value="X-ray"/>
    <property type="resolution" value="2.89 A"/>
    <property type="chains" value="A=1-260"/>
</dbReference>
<dbReference type="PDBsum" id="1XWY"/>
<dbReference type="PDBsum" id="4P5U"/>
<dbReference type="PDBsum" id="4PE8"/>
<dbReference type="SMR" id="P27859"/>
<dbReference type="BioGRID" id="4261335">
    <property type="interactions" value="12"/>
</dbReference>
<dbReference type="FunCoup" id="P27859">
    <property type="interactions" value="554"/>
</dbReference>
<dbReference type="STRING" id="511145.b4483"/>
<dbReference type="jPOST" id="P27859"/>
<dbReference type="PaxDb" id="511145-b4483"/>
<dbReference type="EnsemblBacteria" id="AAT48229">
    <property type="protein sequence ID" value="AAT48229"/>
    <property type="gene ID" value="b4483"/>
</dbReference>
<dbReference type="GeneID" id="2847752"/>
<dbReference type="KEGG" id="ecj:JW5931"/>
<dbReference type="KEGG" id="eco:b4483"/>
<dbReference type="KEGG" id="ecoc:C3026_20770"/>
<dbReference type="PATRIC" id="fig|511145.12.peg.3955"/>
<dbReference type="EchoBASE" id="EB1446"/>
<dbReference type="eggNOG" id="COG0084">
    <property type="taxonomic scope" value="Bacteria"/>
</dbReference>
<dbReference type="HOGENOM" id="CLU_031506_1_2_6"/>
<dbReference type="InParanoid" id="P27859"/>
<dbReference type="OMA" id="YGGSQKH"/>
<dbReference type="OrthoDB" id="9810005at2"/>
<dbReference type="PhylomeDB" id="P27859"/>
<dbReference type="BioCyc" id="EcoCyc:EG11481-MONOMER"/>
<dbReference type="BioCyc" id="MetaCyc:EG11481-MONOMER"/>
<dbReference type="EvolutionaryTrace" id="P27859"/>
<dbReference type="PRO" id="PR:P27859"/>
<dbReference type="Proteomes" id="UP000000625">
    <property type="component" value="Chromosome"/>
</dbReference>
<dbReference type="GO" id="GO:0005737">
    <property type="term" value="C:cytoplasm"/>
    <property type="evidence" value="ECO:0000314"/>
    <property type="project" value="EcoliWiki"/>
</dbReference>
<dbReference type="GO" id="GO:0005829">
    <property type="term" value="C:cytosol"/>
    <property type="evidence" value="ECO:0000314"/>
    <property type="project" value="EcoCyc"/>
</dbReference>
<dbReference type="GO" id="GO:0000175">
    <property type="term" value="F:3'-5'-RNA exonuclease activity"/>
    <property type="evidence" value="ECO:0000314"/>
    <property type="project" value="EcoCyc"/>
</dbReference>
<dbReference type="GO" id="GO:0004536">
    <property type="term" value="F:DNA nuclease activity"/>
    <property type="evidence" value="ECO:0000314"/>
    <property type="project" value="EcoCyc"/>
</dbReference>
<dbReference type="GO" id="GO:0000287">
    <property type="term" value="F:magnesium ion binding"/>
    <property type="evidence" value="ECO:0007669"/>
    <property type="project" value="UniProtKB-UniRule"/>
</dbReference>
<dbReference type="GO" id="GO:0046872">
    <property type="term" value="F:metal ion binding"/>
    <property type="evidence" value="ECO:0000314"/>
    <property type="project" value="EcoliWiki"/>
</dbReference>
<dbReference type="GO" id="GO:0008310">
    <property type="term" value="F:single-stranded DNA 3'-5' DNA exonuclease activity"/>
    <property type="evidence" value="ECO:0000314"/>
    <property type="project" value="EcoCyc"/>
</dbReference>
<dbReference type="GO" id="GO:0042542">
    <property type="term" value="P:response to hydrogen peroxide"/>
    <property type="evidence" value="ECO:0000315"/>
    <property type="project" value="EcoCyc"/>
</dbReference>
<dbReference type="CDD" id="cd01310">
    <property type="entry name" value="TatD_DNAse"/>
    <property type="match status" value="1"/>
</dbReference>
<dbReference type="FunFam" id="3.20.20.140:FF:000018">
    <property type="entry name" value="3'-5' ssDNA/RNA exonuclease TatD"/>
    <property type="match status" value="1"/>
</dbReference>
<dbReference type="Gene3D" id="3.20.20.140">
    <property type="entry name" value="Metal-dependent hydrolases"/>
    <property type="match status" value="1"/>
</dbReference>
<dbReference type="HAMAP" id="MF_00901">
    <property type="entry name" value="TatD_exonuclease"/>
    <property type="match status" value="1"/>
</dbReference>
<dbReference type="InterPro" id="IPR018228">
    <property type="entry name" value="DNase_TatD-rel_CS"/>
</dbReference>
<dbReference type="InterPro" id="IPR024918">
    <property type="entry name" value="Exonuc_TatD"/>
</dbReference>
<dbReference type="InterPro" id="IPR032466">
    <property type="entry name" value="Metal_Hydrolase"/>
</dbReference>
<dbReference type="InterPro" id="IPR001130">
    <property type="entry name" value="TatD-like"/>
</dbReference>
<dbReference type="InterPro" id="IPR050891">
    <property type="entry name" value="TatD-type_Hydrolase"/>
</dbReference>
<dbReference type="NCBIfam" id="NF007745">
    <property type="entry name" value="PRK10425.1"/>
    <property type="match status" value="1"/>
</dbReference>
<dbReference type="PANTHER" id="PTHR10060:SF15">
    <property type="entry name" value="DEOXYRIBONUCLEASE TATDN1"/>
    <property type="match status" value="1"/>
</dbReference>
<dbReference type="PANTHER" id="PTHR10060">
    <property type="entry name" value="TATD FAMILY DEOXYRIBONUCLEASE"/>
    <property type="match status" value="1"/>
</dbReference>
<dbReference type="Pfam" id="PF01026">
    <property type="entry name" value="TatD_DNase"/>
    <property type="match status" value="1"/>
</dbReference>
<dbReference type="PIRSF" id="PIRSF005902">
    <property type="entry name" value="DNase_TatD"/>
    <property type="match status" value="1"/>
</dbReference>
<dbReference type="SUPFAM" id="SSF51556">
    <property type="entry name" value="Metallo-dependent hydrolases"/>
    <property type="match status" value="1"/>
</dbReference>
<dbReference type="PROSITE" id="PS01090">
    <property type="entry name" value="TATD_2"/>
    <property type="match status" value="1"/>
</dbReference>
<dbReference type="PROSITE" id="PS01091">
    <property type="entry name" value="TATD_3"/>
    <property type="match status" value="1"/>
</dbReference>